<gene>
    <name evidence="1" type="primary">nrdI</name>
    <name type="ordered locus">SAB0681</name>
</gene>
<evidence type="ECO:0000255" key="1">
    <source>
        <dbReference type="HAMAP-Rule" id="MF_00128"/>
    </source>
</evidence>
<dbReference type="EMBL" id="AJ938182">
    <property type="protein sequence ID" value="CAI80369.1"/>
    <property type="molecule type" value="Genomic_DNA"/>
</dbReference>
<dbReference type="RefSeq" id="WP_000692521.1">
    <property type="nucleotide sequence ID" value="NC_007622.1"/>
</dbReference>
<dbReference type="SMR" id="Q2YSJ9"/>
<dbReference type="KEGG" id="sab:SAB0681"/>
<dbReference type="HOGENOM" id="CLU_114845_3_0_9"/>
<dbReference type="GO" id="GO:0010181">
    <property type="term" value="F:FMN binding"/>
    <property type="evidence" value="ECO:0007669"/>
    <property type="project" value="InterPro"/>
</dbReference>
<dbReference type="GO" id="GO:0036211">
    <property type="term" value="P:protein modification process"/>
    <property type="evidence" value="ECO:0007669"/>
    <property type="project" value="InterPro"/>
</dbReference>
<dbReference type="Gene3D" id="3.40.50.360">
    <property type="match status" value="1"/>
</dbReference>
<dbReference type="HAMAP" id="MF_00128">
    <property type="entry name" value="NrdI"/>
    <property type="match status" value="1"/>
</dbReference>
<dbReference type="InterPro" id="IPR029039">
    <property type="entry name" value="Flavoprotein-like_sf"/>
</dbReference>
<dbReference type="InterPro" id="IPR020852">
    <property type="entry name" value="RNR_Ib_NrdI_bac"/>
</dbReference>
<dbReference type="InterPro" id="IPR004465">
    <property type="entry name" value="RNR_NrdI"/>
</dbReference>
<dbReference type="NCBIfam" id="TIGR00333">
    <property type="entry name" value="nrdI"/>
    <property type="match status" value="1"/>
</dbReference>
<dbReference type="PANTHER" id="PTHR37297">
    <property type="entry name" value="PROTEIN NRDI"/>
    <property type="match status" value="1"/>
</dbReference>
<dbReference type="PANTHER" id="PTHR37297:SF1">
    <property type="entry name" value="PROTEIN NRDI"/>
    <property type="match status" value="1"/>
</dbReference>
<dbReference type="Pfam" id="PF07972">
    <property type="entry name" value="Flavodoxin_NdrI"/>
    <property type="match status" value="1"/>
</dbReference>
<dbReference type="PIRSF" id="PIRSF005087">
    <property type="entry name" value="NrdI"/>
    <property type="match status" value="1"/>
</dbReference>
<dbReference type="SUPFAM" id="SSF52218">
    <property type="entry name" value="Flavoproteins"/>
    <property type="match status" value="1"/>
</dbReference>
<feature type="chain" id="PRO_1000016527" description="Protein NrdI">
    <location>
        <begin position="1"/>
        <end position="132"/>
    </location>
</feature>
<reference key="1">
    <citation type="journal article" date="2007" name="PLoS ONE">
        <title>Molecular correlates of host specialization in Staphylococcus aureus.</title>
        <authorList>
            <person name="Herron-Olson L."/>
            <person name="Fitzgerald J.R."/>
            <person name="Musser J.M."/>
            <person name="Kapur V."/>
        </authorList>
    </citation>
    <scope>NUCLEOTIDE SEQUENCE [LARGE SCALE GENOMIC DNA]</scope>
    <source>
        <strain>bovine RF122 / ET3-1</strain>
    </source>
</reference>
<accession>Q2YSJ9</accession>
<organism>
    <name type="scientific">Staphylococcus aureus (strain bovine RF122 / ET3-1)</name>
    <dbReference type="NCBI Taxonomy" id="273036"/>
    <lineage>
        <taxon>Bacteria</taxon>
        <taxon>Bacillati</taxon>
        <taxon>Bacillota</taxon>
        <taxon>Bacilli</taxon>
        <taxon>Bacillales</taxon>
        <taxon>Staphylococcaceae</taxon>
        <taxon>Staphylococcus</taxon>
    </lineage>
</organism>
<proteinExistence type="inferred from homology"/>
<comment type="function">
    <text evidence="1">Probably involved in ribonucleotide reductase function.</text>
</comment>
<comment type="similarity">
    <text evidence="1">Belongs to the NrdI family.</text>
</comment>
<protein>
    <recommendedName>
        <fullName evidence="1">Protein NrdI</fullName>
    </recommendedName>
</protein>
<sequence>MKIIYFSFTGNVRRFIKRTELENTLEITAENCMEPVHEPFIIVTGTIGFGEVPEPVQSFLEVNHQYIRGVAASGNRNWGLNFAKAGRTISEEYNVPLLMKFELHGKNKDVIEFKNKVGNFNENHGREKVQSY</sequence>
<name>NRDI_STAAB</name>